<sequence length="238" mass="27122">MKDFNDIETIDFAETGCSFTREAIASGGYYQALKTPTCKEISGRRYKGTNTPDAVRDLWSTPREVIAYLEGRYGKYDLDAAASEENKVCEKFYSQETNCLKRWWGKNKHVWLNPPYSRPDIFVKKAIEQMEHNNQIDMLLPADNSTAWFTEARQNAAEIIWIEADLTEDIDGNEYARSGRLAFISGETGKAVDGNNKGSVIFIMRELKEGEVQQTHYIPITSICPSVKNKRAKVRKVD</sequence>
<feature type="chain" id="PRO_0000454836" description="DNA N-6-adenine-methyltransferase">
    <location>
        <begin position="1"/>
        <end position="238"/>
    </location>
</feature>
<accession>Q38156</accession>
<organism>
    <name type="scientific">Escherichia phage T1</name>
    <name type="common">Bacteriophage T1</name>
    <dbReference type="NCBI Taxonomy" id="2492962"/>
    <lineage>
        <taxon>Viruses</taxon>
        <taxon>Duplodnaviria</taxon>
        <taxon>Heunggongvirae</taxon>
        <taxon>Uroviricota</taxon>
        <taxon>Caudoviricetes</taxon>
        <taxon>Drexlerviridae</taxon>
        <taxon>Tunavirinae</taxon>
        <taxon>Tunavirus</taxon>
        <taxon>Tunavirus T1</taxon>
    </lineage>
</organism>
<dbReference type="EC" id="2.1.1.72" evidence="2"/>
<dbReference type="EMBL" id="J05393">
    <property type="protein sequence ID" value="AAA87390.1"/>
    <property type="status" value="ALT_SEQ"/>
    <property type="molecule type" value="Genomic_DNA"/>
</dbReference>
<dbReference type="EMBL" id="AY216660">
    <property type="status" value="NOT_ANNOTATED_CDS"/>
    <property type="molecule type" value="Genomic_DNA"/>
</dbReference>
<dbReference type="Proteomes" id="UP000001156">
    <property type="component" value="Genome"/>
</dbReference>
<dbReference type="GO" id="GO:0003677">
    <property type="term" value="F:DNA binding"/>
    <property type="evidence" value="ECO:0007669"/>
    <property type="project" value="InterPro"/>
</dbReference>
<dbReference type="GO" id="GO:0009007">
    <property type="term" value="F:site-specific DNA-methyltransferase (adenine-specific) activity"/>
    <property type="evidence" value="ECO:0000314"/>
    <property type="project" value="UniProtKB"/>
</dbReference>
<dbReference type="GO" id="GO:0009307">
    <property type="term" value="P:DNA restriction-modification system"/>
    <property type="evidence" value="ECO:0007669"/>
    <property type="project" value="InterPro"/>
</dbReference>
<dbReference type="GO" id="GO:0032259">
    <property type="term" value="P:methylation"/>
    <property type="evidence" value="ECO:0007669"/>
    <property type="project" value="UniProtKB-KW"/>
</dbReference>
<dbReference type="GO" id="GO:0099018">
    <property type="term" value="P:symbiont-mediated evasion of host restriction-modification system"/>
    <property type="evidence" value="ECO:0007669"/>
    <property type="project" value="UniProtKB-KW"/>
</dbReference>
<dbReference type="GO" id="GO:0052170">
    <property type="term" value="P:symbiont-mediated suppression of host innate immune response"/>
    <property type="evidence" value="ECO:0007669"/>
    <property type="project" value="UniProtKB-KW"/>
</dbReference>
<dbReference type="InterPro" id="IPR008593">
    <property type="entry name" value="Dam_MeTrfase"/>
</dbReference>
<dbReference type="NCBIfam" id="TIGR01712">
    <property type="entry name" value="phage_N6A_met"/>
    <property type="match status" value="1"/>
</dbReference>
<dbReference type="Pfam" id="PF05869">
    <property type="entry name" value="Dam"/>
    <property type="match status" value="1"/>
</dbReference>
<dbReference type="PROSITE" id="PS00092">
    <property type="entry name" value="N6_MTASE"/>
    <property type="match status" value="1"/>
</dbReference>
<name>DAM_BPT1</name>
<gene>
    <name evidence="6" type="primary">M.T1</name>
</gene>
<comment type="function">
    <text evidence="1 2 3">Methyltransferase that methylates adenine residues in the dsDNA sequence 5'-GATC-3' (PubMed:2180941, PubMed:3312202). May prevent degradation of viral DNA by the host restriction-modification antiviral defense system (PubMed:376871).</text>
</comment>
<comment type="catalytic activity">
    <reaction evidence="2">
        <text>a 2'-deoxyadenosine in DNA + S-adenosyl-L-methionine = an N(6)-methyl-2'-deoxyadenosine in DNA + S-adenosyl-L-homocysteine + H(+)</text>
        <dbReference type="Rhea" id="RHEA:15197"/>
        <dbReference type="Rhea" id="RHEA-COMP:12418"/>
        <dbReference type="Rhea" id="RHEA-COMP:12419"/>
        <dbReference type="ChEBI" id="CHEBI:15378"/>
        <dbReference type="ChEBI" id="CHEBI:57856"/>
        <dbReference type="ChEBI" id="CHEBI:59789"/>
        <dbReference type="ChEBI" id="CHEBI:90615"/>
        <dbReference type="ChEBI" id="CHEBI:90616"/>
        <dbReference type="EC" id="2.1.1.72"/>
    </reaction>
</comment>
<comment type="biophysicochemical properties">
    <kinetics>
        <KM evidence="2">4.9 uM for S-adenosylmethionine</KM>
    </kinetics>
    <phDependence>
        <text evidence="2">Optimum pH is 6.9.</text>
    </phDependence>
    <temperatureDependence>
        <text evidence="2">Optimum temperature is between 40 and 43 degrees Celsius.</text>
    </temperatureDependence>
</comment>
<comment type="induction">
    <text evidence="2">Expressed early in the viral replication cycle.</text>
</comment>
<comment type="similarity">
    <text evidence="7">Belongs to the N(4)/N(6)-methyltransferase family.</text>
</comment>
<comment type="sequence caution" evidence="7">
    <conflict type="miscellaneous discrepancy">
        <sequence resource="EMBL-CDS" id="AAA87390"/>
    </conflict>
</comment>
<keyword id="KW-0903">Direct protein sequencing</keyword>
<keyword id="KW-0945">Host-virus interaction</keyword>
<keyword id="KW-1090">Inhibition of host innate immune response by virus</keyword>
<keyword id="KW-0489">Methyltransferase</keyword>
<keyword id="KW-1185">Reference proteome</keyword>
<keyword id="KW-1258">Restriction-modification system evasion by virus</keyword>
<keyword id="KW-0949">S-adenosyl-L-methionine</keyword>
<keyword id="KW-0808">Transferase</keyword>
<keyword id="KW-0899">Viral immunoevasion</keyword>
<evidence type="ECO:0000269" key="1">
    <source>
    </source>
</evidence>
<evidence type="ECO:0000269" key="2">
    <source>
    </source>
</evidence>
<evidence type="ECO:0000269" key="3">
    <source>
    </source>
</evidence>
<evidence type="ECO:0000303" key="4">
    <source>
    </source>
</evidence>
<evidence type="ECO:0000303" key="5">
    <source>
    </source>
</evidence>
<evidence type="ECO:0000303" key="6">
    <source>
    </source>
</evidence>
<evidence type="ECO:0000305" key="7"/>
<proteinExistence type="evidence at protein level"/>
<protein>
    <recommendedName>
        <fullName evidence="5">DNA N-6-adenine-methyltransferase</fullName>
        <shortName evidence="7">DAM</shortName>
        <ecNumber evidence="2">2.1.1.72</ecNumber>
    </recommendedName>
    <alternativeName>
        <fullName evidence="4">Orphan methyltransferase M.EcoT1Dam</fullName>
        <shortName evidence="4">M.EcoT1Dam</shortName>
    </alternativeName>
</protein>
<organismHost>
    <name type="scientific">Escherichia coli</name>
    <dbReference type="NCBI Taxonomy" id="562"/>
</organismHost>
<reference key="1">
    <citation type="journal article" date="1990" name="J. Biol. Chem.">
        <title>Primary structure of a DNA (N6-adenine)-methyltransferase from Escherichia coli virus T1. DNA sequence, genomic organization, and comparative analysis.</title>
        <authorList>
            <person name="Schneider-Scherzer E."/>
            <person name="Auer B."/>
            <person name="de Groot E.J."/>
            <person name="Schweiger M."/>
        </authorList>
    </citation>
    <scope>NUCLEOTIDE SEQUENCE [GENOMIC DNA]</scope>
    <scope>PROTEIN SEQUENCE OF 1-20</scope>
    <scope>FUNCTION</scope>
</reference>
<reference key="2">
    <citation type="journal article" date="2004" name="Virology">
        <title>The genome and proteome of coliphage T1.</title>
        <authorList>
            <person name="Roberts M.D."/>
            <person name="Martin N.L."/>
            <person name="Kropinski A.M."/>
        </authorList>
    </citation>
    <scope>NUCLEOTIDE SEQUENCE [LARGE SCALE GENOMIC DNA]</scope>
</reference>
<reference key="3">
    <citation type="journal article" date="1979" name="J. Virol.">
        <title>Development of Escherichia coli virus T1: escape from host restriction.</title>
        <authorList>
            <person name="Wagner E.F."/>
            <person name="Auer B."/>
            <person name="Schweiger M."/>
        </authorList>
    </citation>
    <scope>FUNCTION</scope>
</reference>
<reference key="4">
    <citation type="journal article" date="1987" name="J. Biol. Chem.">
        <title>Identification, purification, and characterization of Escherichia coli virus T1 DNA methyltransferase.</title>
        <authorList>
            <person name="Scherzer E."/>
            <person name="Auer B."/>
            <person name="Schweiger M."/>
        </authorList>
    </citation>
    <scope>IDENTIFICATION</scope>
    <scope>BIOPHYSICOCHEMICAL PROPERTIES</scope>
    <scope>FUNCTION</scope>
    <scope>INDUCTION</scope>
    <scope>CATALYTIC ACTIVITY</scope>
</reference>
<reference key="5">
    <citation type="journal article" date="2003" name="Nucleic Acids Res.">
        <title>A nomenclature for restriction enzymes, DNA methyltransferases, homing endonucleases and their genes.</title>
        <authorList>
            <person name="Roberts R.J."/>
            <person name="Belfort M."/>
            <person name="Bestor T."/>
            <person name="Bhagwat A.S."/>
            <person name="Bickle T.A."/>
            <person name="Bitinaite J."/>
            <person name="Blumenthal R.M."/>
            <person name="Degtyarev S.K."/>
            <person name="Dryden D.T."/>
            <person name="Dybvig K."/>
            <person name="Firman K."/>
            <person name="Gromova E.S."/>
            <person name="Gumport R.I."/>
            <person name="Halford S.E."/>
            <person name="Hattman S."/>
            <person name="Heitman J."/>
            <person name="Hornby D.P."/>
            <person name="Janulaitis A."/>
            <person name="Jeltsch A."/>
            <person name="Josephsen J."/>
            <person name="Kiss A."/>
            <person name="Klaenhammer T.R."/>
            <person name="Kobayashi I."/>
            <person name="Kong H."/>
            <person name="Krueger D.H."/>
            <person name="Lacks S."/>
            <person name="Marinus M.G."/>
            <person name="Miyahara M."/>
            <person name="Morgan R.D."/>
            <person name="Murray N.E."/>
            <person name="Nagaraja V."/>
            <person name="Piekarowicz A."/>
            <person name="Pingoud A."/>
            <person name="Raleigh E."/>
            <person name="Rao D.N."/>
            <person name="Reich N."/>
            <person name="Repin V.E."/>
            <person name="Selker E.U."/>
            <person name="Shaw P.C."/>
            <person name="Stein D.C."/>
            <person name="Stoddard B.L."/>
            <person name="Szybalski W."/>
            <person name="Trautner T.A."/>
            <person name="Van Etten J.L."/>
            <person name="Vitor J.M."/>
            <person name="Wilson G.G."/>
            <person name="Xu S.Y."/>
        </authorList>
    </citation>
    <scope>NOMENCLATURE</scope>
</reference>